<protein>
    <recommendedName>
        <fullName evidence="1">Small ribosomal subunit protein bS6</fullName>
    </recommendedName>
    <alternativeName>
        <fullName evidence="3">30S ribosomal protein S6</fullName>
    </alternativeName>
</protein>
<reference key="1">
    <citation type="submission" date="2007-10" db="EMBL/GenBank/DDBJ databases">
        <title>Genome sequence of Campylobacter concisus 13826 isolated from human feces.</title>
        <authorList>
            <person name="Fouts D.E."/>
            <person name="Mongodin E.F."/>
            <person name="Puiu D."/>
            <person name="Sebastian Y."/>
            <person name="Miller W.G."/>
            <person name="Mandrell R.E."/>
            <person name="On S."/>
            <person name="Nelson K.E."/>
        </authorList>
    </citation>
    <scope>NUCLEOTIDE SEQUENCE [LARGE SCALE GENOMIC DNA]</scope>
    <source>
        <strain>13826</strain>
    </source>
</reference>
<comment type="function">
    <text evidence="1">Binds together with bS18 to 16S ribosomal RNA.</text>
</comment>
<comment type="similarity">
    <text evidence="1">Belongs to the bacterial ribosomal protein bS6 family.</text>
</comment>
<feature type="chain" id="PRO_1000005237" description="Small ribosomal subunit protein bS6">
    <location>
        <begin position="1"/>
        <end position="139"/>
    </location>
</feature>
<feature type="region of interest" description="Disordered" evidence="2">
    <location>
        <begin position="114"/>
        <end position="139"/>
    </location>
</feature>
<feature type="compositionally biased region" description="Basic and acidic residues" evidence="2">
    <location>
        <begin position="114"/>
        <end position="133"/>
    </location>
</feature>
<proteinExistence type="inferred from homology"/>
<accession>A7ZEF6</accession>
<name>RS6_CAMC1</name>
<dbReference type="EMBL" id="CP000792">
    <property type="protein sequence ID" value="EAT98784.1"/>
    <property type="molecule type" value="Genomic_DNA"/>
</dbReference>
<dbReference type="RefSeq" id="WP_012140072.1">
    <property type="nucleotide sequence ID" value="NC_009802.2"/>
</dbReference>
<dbReference type="SMR" id="A7ZEF6"/>
<dbReference type="STRING" id="360104.CCC13826_1998"/>
<dbReference type="KEGG" id="cco:CCC13826_1998"/>
<dbReference type="eggNOG" id="COG0360">
    <property type="taxonomic scope" value="Bacteria"/>
</dbReference>
<dbReference type="HOGENOM" id="CLU_113441_4_1_7"/>
<dbReference type="OrthoDB" id="9812702at2"/>
<dbReference type="Proteomes" id="UP000001121">
    <property type="component" value="Chromosome"/>
</dbReference>
<dbReference type="GO" id="GO:0022627">
    <property type="term" value="C:cytosolic small ribosomal subunit"/>
    <property type="evidence" value="ECO:0007669"/>
    <property type="project" value="TreeGrafter"/>
</dbReference>
<dbReference type="GO" id="GO:0070181">
    <property type="term" value="F:small ribosomal subunit rRNA binding"/>
    <property type="evidence" value="ECO:0007669"/>
    <property type="project" value="TreeGrafter"/>
</dbReference>
<dbReference type="GO" id="GO:0003735">
    <property type="term" value="F:structural constituent of ribosome"/>
    <property type="evidence" value="ECO:0007669"/>
    <property type="project" value="InterPro"/>
</dbReference>
<dbReference type="GO" id="GO:0006412">
    <property type="term" value="P:translation"/>
    <property type="evidence" value="ECO:0007669"/>
    <property type="project" value="UniProtKB-UniRule"/>
</dbReference>
<dbReference type="CDD" id="cd00473">
    <property type="entry name" value="bS6"/>
    <property type="match status" value="1"/>
</dbReference>
<dbReference type="Gene3D" id="3.30.70.60">
    <property type="match status" value="1"/>
</dbReference>
<dbReference type="HAMAP" id="MF_00360">
    <property type="entry name" value="Ribosomal_bS6"/>
    <property type="match status" value="1"/>
</dbReference>
<dbReference type="InterPro" id="IPR000529">
    <property type="entry name" value="Ribosomal_bS6"/>
</dbReference>
<dbReference type="InterPro" id="IPR035980">
    <property type="entry name" value="Ribosomal_bS6_sf"/>
</dbReference>
<dbReference type="InterPro" id="IPR020814">
    <property type="entry name" value="Ribosomal_S6_plastid/chlpt"/>
</dbReference>
<dbReference type="InterPro" id="IPR014717">
    <property type="entry name" value="Transl_elong_EF1B/ribsomal_bS6"/>
</dbReference>
<dbReference type="NCBIfam" id="TIGR00166">
    <property type="entry name" value="S6"/>
    <property type="match status" value="1"/>
</dbReference>
<dbReference type="PANTHER" id="PTHR21011">
    <property type="entry name" value="MITOCHONDRIAL 28S RIBOSOMAL PROTEIN S6"/>
    <property type="match status" value="1"/>
</dbReference>
<dbReference type="PANTHER" id="PTHR21011:SF1">
    <property type="entry name" value="SMALL RIBOSOMAL SUBUNIT PROTEIN BS6M"/>
    <property type="match status" value="1"/>
</dbReference>
<dbReference type="Pfam" id="PF01250">
    <property type="entry name" value="Ribosomal_S6"/>
    <property type="match status" value="1"/>
</dbReference>
<dbReference type="SUPFAM" id="SSF54995">
    <property type="entry name" value="Ribosomal protein S6"/>
    <property type="match status" value="1"/>
</dbReference>
<organism>
    <name type="scientific">Campylobacter concisus (strain 13826)</name>
    <dbReference type="NCBI Taxonomy" id="360104"/>
    <lineage>
        <taxon>Bacteria</taxon>
        <taxon>Pseudomonadati</taxon>
        <taxon>Campylobacterota</taxon>
        <taxon>Epsilonproteobacteria</taxon>
        <taxon>Campylobacterales</taxon>
        <taxon>Campylobacteraceae</taxon>
        <taxon>Campylobacter</taxon>
    </lineage>
</organism>
<evidence type="ECO:0000255" key="1">
    <source>
        <dbReference type="HAMAP-Rule" id="MF_00360"/>
    </source>
</evidence>
<evidence type="ECO:0000256" key="2">
    <source>
        <dbReference type="SAM" id="MobiDB-lite"/>
    </source>
</evidence>
<evidence type="ECO:0000305" key="3"/>
<keyword id="KW-0687">Ribonucleoprotein</keyword>
<keyword id="KW-0689">Ribosomal protein</keyword>
<keyword id="KW-0694">RNA-binding</keyword>
<keyword id="KW-0699">rRNA-binding</keyword>
<sequence length="139" mass="16394">MKHYELLFILKPTLTEEEVKAKVDFVKEVITKNGGEIATVIEMGTRKLAYTIKKYERGTYFVIYYKAPPALLAELTRNVRITEDIIRFLSVKYENKREIAAWERLCKGIKQTIKKEPREPRAPREPRVEKVDEQTFTEE</sequence>
<gene>
    <name evidence="1" type="primary">rpsF</name>
    <name type="ordered locus">Ccon26_13150</name>
    <name type="ORF">CCC13826_1998</name>
</gene>